<sequence>MRFFTEIKPLKTYVAEQKREGKIIGFVPTMGYLHDGHLSLVRKAKLQADVVIVSIFVNPLQFGPNEDFAKYPRDLERDLALLQEEGVDCVFAPSAEEMYKEGFSTFVEVNGEITEVMCGKSRPGHFKGVATVVTKLFNIVTPDLAFFGQKDAQQLFIIEKLVRDLNLNVEIVSVPTRREEDGLAMSSRNTYLNPEERKAATILYRALKRGEELVLAGERNPERLKKLIEEFIKTEPLARIDYVEVRSVPDLKAMDVIKGKFIIALAVYIGSTRLIDNFILEVD</sequence>
<dbReference type="EC" id="6.3.2.1" evidence="1"/>
<dbReference type="EMBL" id="CP000141">
    <property type="protein sequence ID" value="ABB14551.1"/>
    <property type="molecule type" value="Genomic_DNA"/>
</dbReference>
<dbReference type="RefSeq" id="WP_011345246.1">
    <property type="nucleotide sequence ID" value="NC_007503.1"/>
</dbReference>
<dbReference type="SMR" id="Q3A9L1"/>
<dbReference type="FunCoup" id="Q3A9L1">
    <property type="interactions" value="429"/>
</dbReference>
<dbReference type="STRING" id="246194.CHY_2376"/>
<dbReference type="KEGG" id="chy:CHY_2376"/>
<dbReference type="eggNOG" id="COG0414">
    <property type="taxonomic scope" value="Bacteria"/>
</dbReference>
<dbReference type="HOGENOM" id="CLU_047148_0_0_9"/>
<dbReference type="InParanoid" id="Q3A9L1"/>
<dbReference type="OrthoDB" id="9773087at2"/>
<dbReference type="UniPathway" id="UPA00028">
    <property type="reaction ID" value="UER00005"/>
</dbReference>
<dbReference type="Proteomes" id="UP000002706">
    <property type="component" value="Chromosome"/>
</dbReference>
<dbReference type="GO" id="GO:0005829">
    <property type="term" value="C:cytosol"/>
    <property type="evidence" value="ECO:0007669"/>
    <property type="project" value="TreeGrafter"/>
</dbReference>
<dbReference type="GO" id="GO:0005524">
    <property type="term" value="F:ATP binding"/>
    <property type="evidence" value="ECO:0007669"/>
    <property type="project" value="UniProtKB-KW"/>
</dbReference>
<dbReference type="GO" id="GO:0004592">
    <property type="term" value="F:pantoate-beta-alanine ligase activity"/>
    <property type="evidence" value="ECO:0007669"/>
    <property type="project" value="UniProtKB-UniRule"/>
</dbReference>
<dbReference type="GO" id="GO:0015940">
    <property type="term" value="P:pantothenate biosynthetic process"/>
    <property type="evidence" value="ECO:0007669"/>
    <property type="project" value="UniProtKB-UniRule"/>
</dbReference>
<dbReference type="CDD" id="cd00560">
    <property type="entry name" value="PanC"/>
    <property type="match status" value="1"/>
</dbReference>
<dbReference type="FunFam" id="3.30.1300.10:FF:000001">
    <property type="entry name" value="Pantothenate synthetase"/>
    <property type="match status" value="1"/>
</dbReference>
<dbReference type="FunFam" id="3.40.50.620:FF:000013">
    <property type="entry name" value="Pantothenate synthetase"/>
    <property type="match status" value="1"/>
</dbReference>
<dbReference type="Gene3D" id="3.40.50.620">
    <property type="entry name" value="HUPs"/>
    <property type="match status" value="1"/>
</dbReference>
<dbReference type="Gene3D" id="3.30.1300.10">
    <property type="entry name" value="Pantoate-beta-alanine ligase, C-terminal domain"/>
    <property type="match status" value="1"/>
</dbReference>
<dbReference type="HAMAP" id="MF_00158">
    <property type="entry name" value="PanC"/>
    <property type="match status" value="1"/>
</dbReference>
<dbReference type="InterPro" id="IPR004821">
    <property type="entry name" value="Cyt_trans-like"/>
</dbReference>
<dbReference type="InterPro" id="IPR003721">
    <property type="entry name" value="Pantoate_ligase"/>
</dbReference>
<dbReference type="InterPro" id="IPR042176">
    <property type="entry name" value="Pantoate_ligase_C"/>
</dbReference>
<dbReference type="InterPro" id="IPR014729">
    <property type="entry name" value="Rossmann-like_a/b/a_fold"/>
</dbReference>
<dbReference type="NCBIfam" id="TIGR00125">
    <property type="entry name" value="cyt_tran_rel"/>
    <property type="match status" value="1"/>
</dbReference>
<dbReference type="NCBIfam" id="TIGR00018">
    <property type="entry name" value="panC"/>
    <property type="match status" value="1"/>
</dbReference>
<dbReference type="PANTHER" id="PTHR21299">
    <property type="entry name" value="CYTIDYLATE KINASE/PANTOATE-BETA-ALANINE LIGASE"/>
    <property type="match status" value="1"/>
</dbReference>
<dbReference type="PANTHER" id="PTHR21299:SF1">
    <property type="entry name" value="PANTOATE--BETA-ALANINE LIGASE"/>
    <property type="match status" value="1"/>
</dbReference>
<dbReference type="Pfam" id="PF02569">
    <property type="entry name" value="Pantoate_ligase"/>
    <property type="match status" value="1"/>
</dbReference>
<dbReference type="SUPFAM" id="SSF52374">
    <property type="entry name" value="Nucleotidylyl transferase"/>
    <property type="match status" value="1"/>
</dbReference>
<feature type="chain" id="PRO_0000305422" description="Pantothenate synthetase">
    <location>
        <begin position="1"/>
        <end position="283"/>
    </location>
</feature>
<feature type="active site" description="Proton donor" evidence="1">
    <location>
        <position position="37"/>
    </location>
</feature>
<feature type="binding site" evidence="1">
    <location>
        <begin position="30"/>
        <end position="37"/>
    </location>
    <ligand>
        <name>ATP</name>
        <dbReference type="ChEBI" id="CHEBI:30616"/>
    </ligand>
</feature>
<feature type="binding site" evidence="1">
    <location>
        <position position="61"/>
    </location>
    <ligand>
        <name>(R)-pantoate</name>
        <dbReference type="ChEBI" id="CHEBI:15980"/>
    </ligand>
</feature>
<feature type="binding site" evidence="1">
    <location>
        <position position="61"/>
    </location>
    <ligand>
        <name>beta-alanine</name>
        <dbReference type="ChEBI" id="CHEBI:57966"/>
    </ligand>
</feature>
<feature type="binding site" evidence="1">
    <location>
        <begin position="148"/>
        <end position="151"/>
    </location>
    <ligand>
        <name>ATP</name>
        <dbReference type="ChEBI" id="CHEBI:30616"/>
    </ligand>
</feature>
<feature type="binding site" evidence="1">
    <location>
        <position position="154"/>
    </location>
    <ligand>
        <name>(R)-pantoate</name>
        <dbReference type="ChEBI" id="CHEBI:15980"/>
    </ligand>
</feature>
<feature type="binding site" evidence="1">
    <location>
        <begin position="185"/>
        <end position="188"/>
    </location>
    <ligand>
        <name>ATP</name>
        <dbReference type="ChEBI" id="CHEBI:30616"/>
    </ligand>
</feature>
<evidence type="ECO:0000255" key="1">
    <source>
        <dbReference type="HAMAP-Rule" id="MF_00158"/>
    </source>
</evidence>
<reference key="1">
    <citation type="journal article" date="2005" name="PLoS Genet.">
        <title>Life in hot carbon monoxide: the complete genome sequence of Carboxydothermus hydrogenoformans Z-2901.</title>
        <authorList>
            <person name="Wu M."/>
            <person name="Ren Q."/>
            <person name="Durkin A.S."/>
            <person name="Daugherty S.C."/>
            <person name="Brinkac L.M."/>
            <person name="Dodson R.J."/>
            <person name="Madupu R."/>
            <person name="Sullivan S.A."/>
            <person name="Kolonay J.F."/>
            <person name="Nelson W.C."/>
            <person name="Tallon L.J."/>
            <person name="Jones K.M."/>
            <person name="Ulrich L.E."/>
            <person name="Gonzalez J.M."/>
            <person name="Zhulin I.B."/>
            <person name="Robb F.T."/>
            <person name="Eisen J.A."/>
        </authorList>
    </citation>
    <scope>NUCLEOTIDE SEQUENCE [LARGE SCALE GENOMIC DNA]</scope>
    <source>
        <strain>ATCC BAA-161 / DSM 6008 / Z-2901</strain>
    </source>
</reference>
<protein>
    <recommendedName>
        <fullName evidence="1">Pantothenate synthetase</fullName>
        <shortName evidence="1">PS</shortName>
        <ecNumber evidence="1">6.3.2.1</ecNumber>
    </recommendedName>
    <alternativeName>
        <fullName evidence="1">Pantoate--beta-alanine ligase</fullName>
    </alternativeName>
    <alternativeName>
        <fullName evidence="1">Pantoate-activating enzyme</fullName>
    </alternativeName>
</protein>
<proteinExistence type="inferred from homology"/>
<comment type="function">
    <text evidence="1">Catalyzes the condensation of pantoate with beta-alanine in an ATP-dependent reaction via a pantoyl-adenylate intermediate.</text>
</comment>
<comment type="catalytic activity">
    <reaction evidence="1">
        <text>(R)-pantoate + beta-alanine + ATP = (R)-pantothenate + AMP + diphosphate + H(+)</text>
        <dbReference type="Rhea" id="RHEA:10912"/>
        <dbReference type="ChEBI" id="CHEBI:15378"/>
        <dbReference type="ChEBI" id="CHEBI:15980"/>
        <dbReference type="ChEBI" id="CHEBI:29032"/>
        <dbReference type="ChEBI" id="CHEBI:30616"/>
        <dbReference type="ChEBI" id="CHEBI:33019"/>
        <dbReference type="ChEBI" id="CHEBI:57966"/>
        <dbReference type="ChEBI" id="CHEBI:456215"/>
        <dbReference type="EC" id="6.3.2.1"/>
    </reaction>
</comment>
<comment type="pathway">
    <text evidence="1">Cofactor biosynthesis; (R)-pantothenate biosynthesis; (R)-pantothenate from (R)-pantoate and beta-alanine: step 1/1.</text>
</comment>
<comment type="subunit">
    <text evidence="1">Homodimer.</text>
</comment>
<comment type="subcellular location">
    <subcellularLocation>
        <location evidence="1">Cytoplasm</location>
    </subcellularLocation>
</comment>
<comment type="miscellaneous">
    <text evidence="1">The reaction proceeds by a bi uni uni bi ping pong mechanism.</text>
</comment>
<comment type="similarity">
    <text evidence="1">Belongs to the pantothenate synthetase family.</text>
</comment>
<accession>Q3A9L1</accession>
<keyword id="KW-0067">ATP-binding</keyword>
<keyword id="KW-0963">Cytoplasm</keyword>
<keyword id="KW-0436">Ligase</keyword>
<keyword id="KW-0547">Nucleotide-binding</keyword>
<keyword id="KW-0566">Pantothenate biosynthesis</keyword>
<keyword id="KW-1185">Reference proteome</keyword>
<organism>
    <name type="scientific">Carboxydothermus hydrogenoformans (strain ATCC BAA-161 / DSM 6008 / Z-2901)</name>
    <dbReference type="NCBI Taxonomy" id="246194"/>
    <lineage>
        <taxon>Bacteria</taxon>
        <taxon>Bacillati</taxon>
        <taxon>Bacillota</taxon>
        <taxon>Clostridia</taxon>
        <taxon>Thermoanaerobacterales</taxon>
        <taxon>Thermoanaerobacteraceae</taxon>
        <taxon>Carboxydothermus</taxon>
    </lineage>
</organism>
<name>PANC_CARHZ</name>
<gene>
    <name evidence="1" type="primary">panC</name>
    <name type="ordered locus">CHY_2376</name>
</gene>